<proteinExistence type="inferred from homology"/>
<comment type="function">
    <text evidence="1">Catalyzes the condensation of ATP and 5-phosphoribose 1-diphosphate to form N'-(5'-phosphoribosyl)-ATP (PR-ATP). Has a crucial role in the pathway because the rate of histidine biosynthesis seems to be controlled primarily by regulation of HisG enzymatic activity.</text>
</comment>
<comment type="catalytic activity">
    <reaction evidence="1">
        <text>1-(5-phospho-beta-D-ribosyl)-ATP + diphosphate = 5-phospho-alpha-D-ribose 1-diphosphate + ATP</text>
        <dbReference type="Rhea" id="RHEA:18473"/>
        <dbReference type="ChEBI" id="CHEBI:30616"/>
        <dbReference type="ChEBI" id="CHEBI:33019"/>
        <dbReference type="ChEBI" id="CHEBI:58017"/>
        <dbReference type="ChEBI" id="CHEBI:73183"/>
        <dbReference type="EC" id="2.4.2.17"/>
    </reaction>
</comment>
<comment type="cofactor">
    <cofactor evidence="1">
        <name>Mg(2+)</name>
        <dbReference type="ChEBI" id="CHEBI:18420"/>
    </cofactor>
</comment>
<comment type="activity regulation">
    <text evidence="1">Feedback inhibited by histidine.</text>
</comment>
<comment type="pathway">
    <text evidence="1">Amino-acid biosynthesis; L-histidine biosynthesis; L-histidine from 5-phospho-alpha-D-ribose 1-diphosphate: step 1/9.</text>
</comment>
<comment type="subcellular location">
    <subcellularLocation>
        <location evidence="1">Cytoplasm</location>
    </subcellularLocation>
</comment>
<comment type="similarity">
    <text evidence="1">Belongs to the ATP phosphoribosyltransferase family. Long subfamily.</text>
</comment>
<evidence type="ECO:0000255" key="1">
    <source>
        <dbReference type="HAMAP-Rule" id="MF_00079"/>
    </source>
</evidence>
<organism>
    <name type="scientific">Psychromonas ingrahamii (strain DSM 17664 / CCUG 51855 / 37)</name>
    <dbReference type="NCBI Taxonomy" id="357804"/>
    <lineage>
        <taxon>Bacteria</taxon>
        <taxon>Pseudomonadati</taxon>
        <taxon>Pseudomonadota</taxon>
        <taxon>Gammaproteobacteria</taxon>
        <taxon>Alteromonadales</taxon>
        <taxon>Psychromonadaceae</taxon>
        <taxon>Psychromonas</taxon>
    </lineage>
</organism>
<protein>
    <recommendedName>
        <fullName evidence="1">ATP phosphoribosyltransferase</fullName>
        <shortName evidence="1">ATP-PRT</shortName>
        <shortName evidence="1">ATP-PRTase</shortName>
        <ecNumber evidence="1">2.4.2.17</ecNumber>
    </recommendedName>
</protein>
<accession>A1SVD5</accession>
<sequence length="298" mass="32957">MPEQRLRIAIQKKGRLSEDTVKLLKACGVKVNLNTQRLIAHSDNMAIDILRVRDDDIPGLIMDGVVDLGFIGQNVLEEENMMRTVAKEPTAHKVVKELAFGACRFSIAVDQDFDYQGAKSLANLRIATTYVHILKRFMEEQNIPYTSCMLTGSVEVAPRAGLADAICDLVSTGATLEANGLKEVEVIYRSTAVLIQRADPLNQQKQDLVNRLLTRIDGVQSAKECKYIMLHAPTANLEAIKSLLPGSEQPTVMQLSGSSDHVALHVVSKENLFWETMEQLKTLGASSILVLPIEKMME</sequence>
<feature type="chain" id="PRO_1000004487" description="ATP phosphoribosyltransferase">
    <location>
        <begin position="1"/>
        <end position="298"/>
    </location>
</feature>
<name>HIS1_PSYIN</name>
<gene>
    <name evidence="1" type="primary">hisG</name>
    <name type="ordered locus">Ping_1657</name>
</gene>
<dbReference type="EC" id="2.4.2.17" evidence="1"/>
<dbReference type="EMBL" id="CP000510">
    <property type="protein sequence ID" value="ABM03450.1"/>
    <property type="molecule type" value="Genomic_DNA"/>
</dbReference>
<dbReference type="RefSeq" id="WP_011770010.1">
    <property type="nucleotide sequence ID" value="NC_008709.1"/>
</dbReference>
<dbReference type="SMR" id="A1SVD5"/>
<dbReference type="STRING" id="357804.Ping_1657"/>
<dbReference type="KEGG" id="pin:Ping_1657"/>
<dbReference type="eggNOG" id="COG0040">
    <property type="taxonomic scope" value="Bacteria"/>
</dbReference>
<dbReference type="HOGENOM" id="CLU_038115_1_0_6"/>
<dbReference type="OrthoDB" id="9801867at2"/>
<dbReference type="UniPathway" id="UPA00031">
    <property type="reaction ID" value="UER00006"/>
</dbReference>
<dbReference type="Proteomes" id="UP000000639">
    <property type="component" value="Chromosome"/>
</dbReference>
<dbReference type="GO" id="GO:0005737">
    <property type="term" value="C:cytoplasm"/>
    <property type="evidence" value="ECO:0007669"/>
    <property type="project" value="UniProtKB-SubCell"/>
</dbReference>
<dbReference type="GO" id="GO:0005524">
    <property type="term" value="F:ATP binding"/>
    <property type="evidence" value="ECO:0007669"/>
    <property type="project" value="UniProtKB-KW"/>
</dbReference>
<dbReference type="GO" id="GO:0003879">
    <property type="term" value="F:ATP phosphoribosyltransferase activity"/>
    <property type="evidence" value="ECO:0007669"/>
    <property type="project" value="UniProtKB-UniRule"/>
</dbReference>
<dbReference type="GO" id="GO:0000287">
    <property type="term" value="F:magnesium ion binding"/>
    <property type="evidence" value="ECO:0007669"/>
    <property type="project" value="UniProtKB-UniRule"/>
</dbReference>
<dbReference type="GO" id="GO:0000105">
    <property type="term" value="P:L-histidine biosynthetic process"/>
    <property type="evidence" value="ECO:0007669"/>
    <property type="project" value="UniProtKB-UniRule"/>
</dbReference>
<dbReference type="CDD" id="cd13592">
    <property type="entry name" value="PBP2_HisGL2"/>
    <property type="match status" value="1"/>
</dbReference>
<dbReference type="FunFam" id="3.30.70.120:FF:000002">
    <property type="entry name" value="ATP phosphoribosyltransferase"/>
    <property type="match status" value="1"/>
</dbReference>
<dbReference type="FunFam" id="3.40.190.10:FF:000008">
    <property type="entry name" value="ATP phosphoribosyltransferase"/>
    <property type="match status" value="1"/>
</dbReference>
<dbReference type="Gene3D" id="3.30.70.120">
    <property type="match status" value="1"/>
</dbReference>
<dbReference type="Gene3D" id="3.40.190.10">
    <property type="entry name" value="Periplasmic binding protein-like II"/>
    <property type="match status" value="2"/>
</dbReference>
<dbReference type="HAMAP" id="MF_00079">
    <property type="entry name" value="HisG_Long"/>
    <property type="match status" value="1"/>
</dbReference>
<dbReference type="InterPro" id="IPR020621">
    <property type="entry name" value="ATP-PRT_HisG_long"/>
</dbReference>
<dbReference type="InterPro" id="IPR013820">
    <property type="entry name" value="ATP_PRibTrfase_cat"/>
</dbReference>
<dbReference type="InterPro" id="IPR018198">
    <property type="entry name" value="ATP_PRibTrfase_CS"/>
</dbReference>
<dbReference type="InterPro" id="IPR001348">
    <property type="entry name" value="ATP_PRibTrfase_HisG"/>
</dbReference>
<dbReference type="InterPro" id="IPR013115">
    <property type="entry name" value="HisG_C"/>
</dbReference>
<dbReference type="InterPro" id="IPR011322">
    <property type="entry name" value="N-reg_PII-like_a/b"/>
</dbReference>
<dbReference type="InterPro" id="IPR015867">
    <property type="entry name" value="N-reg_PII/ATP_PRibTrfase_C"/>
</dbReference>
<dbReference type="NCBIfam" id="TIGR00070">
    <property type="entry name" value="hisG"/>
    <property type="match status" value="1"/>
</dbReference>
<dbReference type="NCBIfam" id="TIGR03455">
    <property type="entry name" value="HisG_C-term"/>
    <property type="match status" value="1"/>
</dbReference>
<dbReference type="PANTHER" id="PTHR21403:SF8">
    <property type="entry name" value="ATP PHOSPHORIBOSYLTRANSFERASE"/>
    <property type="match status" value="1"/>
</dbReference>
<dbReference type="PANTHER" id="PTHR21403">
    <property type="entry name" value="ATP PHOSPHORIBOSYLTRANSFERASE ATP-PRTASE"/>
    <property type="match status" value="1"/>
</dbReference>
<dbReference type="Pfam" id="PF01634">
    <property type="entry name" value="HisG"/>
    <property type="match status" value="1"/>
</dbReference>
<dbReference type="Pfam" id="PF08029">
    <property type="entry name" value="HisG_C"/>
    <property type="match status" value="1"/>
</dbReference>
<dbReference type="SUPFAM" id="SSF54913">
    <property type="entry name" value="GlnB-like"/>
    <property type="match status" value="1"/>
</dbReference>
<dbReference type="SUPFAM" id="SSF53850">
    <property type="entry name" value="Periplasmic binding protein-like II"/>
    <property type="match status" value="1"/>
</dbReference>
<dbReference type="PROSITE" id="PS01316">
    <property type="entry name" value="ATP_P_PHORIBOSYLTR"/>
    <property type="match status" value="1"/>
</dbReference>
<reference key="1">
    <citation type="journal article" date="2008" name="BMC Genomics">
        <title>Genomics of an extreme psychrophile, Psychromonas ingrahamii.</title>
        <authorList>
            <person name="Riley M."/>
            <person name="Staley J.T."/>
            <person name="Danchin A."/>
            <person name="Wang T.Z."/>
            <person name="Brettin T.S."/>
            <person name="Hauser L.J."/>
            <person name="Land M.L."/>
            <person name="Thompson L.S."/>
        </authorList>
    </citation>
    <scope>NUCLEOTIDE SEQUENCE [LARGE SCALE GENOMIC DNA]</scope>
    <source>
        <strain>DSM 17664 / CCUG 51855 / 37</strain>
    </source>
</reference>
<keyword id="KW-0028">Amino-acid biosynthesis</keyword>
<keyword id="KW-0067">ATP-binding</keyword>
<keyword id="KW-0963">Cytoplasm</keyword>
<keyword id="KW-0328">Glycosyltransferase</keyword>
<keyword id="KW-0368">Histidine biosynthesis</keyword>
<keyword id="KW-0460">Magnesium</keyword>
<keyword id="KW-0479">Metal-binding</keyword>
<keyword id="KW-0547">Nucleotide-binding</keyword>
<keyword id="KW-1185">Reference proteome</keyword>
<keyword id="KW-0808">Transferase</keyword>